<gene>
    <name type="primary">Vti1a</name>
    <name type="synonym">Vti1</name>
    <name type="synonym">Vti1l2</name>
</gene>
<sequence>MSSDFEGYEQDFAVLTAEITSKIARVPRLPPDEKKQMVANVEKQLEEARELLEQMDLEVREIPPQSRGMYSNRMRSYKQEMGKLETDFKRSRIAYSDEVRNELLGDAGNSSENQRAHLLDNTERLERSSRRLEAGYQIAVETEQIGQEMLENLSHDREKIQRARDRLRDADANLGKSSRILTGMLRRIIQNRILLVILGIIVVIAILTAIAFFVKGH</sequence>
<comment type="function">
    <text evidence="3">V-SNARE that mediates vesicle transport pathways through interactions with t-SNAREs on the target membrane. These interactions are proposed to mediate aspects of the specificity of vesicle trafficking and to promote fusion of the lipid bilayers. Involved in vesicular transport from the late endosomes to the trans-Golgi network. Along with VAMP7, involved in an non-conventional RAB1-dependent traffic route to the cell surface used by KCNIP1 and KCND2. May be concerned with increased secretion of cytokines associated with cellular senescence.</text>
</comment>
<comment type="subunit">
    <text evidence="1">Interacts with distinct SNARE complexes that contain either STX5 or STX6. Interacts with NAPA and, to a lesser extent, with NAPG. Identified in a complex containing STX6, STX12, VAMP4 and VTI1A (By similarity).</text>
</comment>
<comment type="subcellular location">
    <subcellularLocation>
        <location evidence="1">Golgi apparatus membrane</location>
        <topology evidence="1">Single-pass type IV membrane protein</topology>
    </subcellularLocation>
</comment>
<comment type="tissue specificity">
    <text evidence="4">Widely expressed.</text>
</comment>
<comment type="similarity">
    <text evidence="5">Belongs to the VTI1 family.</text>
</comment>
<name>VTI1A_MOUSE</name>
<evidence type="ECO:0000250" key="1"/>
<evidence type="ECO:0000255" key="2"/>
<evidence type="ECO:0000269" key="3">
    <source>
    </source>
</evidence>
<evidence type="ECO:0000269" key="4">
    <source>
    </source>
</evidence>
<evidence type="ECO:0000305" key="5"/>
<evidence type="ECO:0007829" key="6">
    <source>
        <dbReference type="PDB" id="1VCS"/>
    </source>
</evidence>
<reference key="1">
    <citation type="journal article" date="1998" name="J. Biol. Chem.">
        <title>A 29-kilodalton Golgi soluble N-ethylmaleimide-sensitive factor attachment protein receptor (Vti1-rp2) implicated in protein trafficking in the secretory pathway.</title>
        <authorList>
            <person name="Xu Y."/>
            <person name="Wong S.H."/>
            <person name="Tang B.L."/>
            <person name="Subramaniam V.N."/>
            <person name="Zhang T."/>
            <person name="Hong W."/>
        </authorList>
    </citation>
    <scope>NUCLEOTIDE SEQUENCE [MRNA]</scope>
    <scope>INTERACTION WITH NAPA AND NAPG</scope>
    <scope>IDENTIFICATION IN SNARE COMPLEXES WITH STX5 OR STX6</scope>
    <scope>TISSUE SPECIFICITY</scope>
</reference>
<reference key="2">
    <citation type="journal article" date="1998" name="J. Biol. Chem.">
        <title>Seven novel mammalian SNARE proteins localize to distinct membrane compartments.</title>
        <authorList>
            <person name="Advani R.J."/>
            <person name="Bae H.-R."/>
            <person name="Bock J.B."/>
            <person name="Chao D.S."/>
            <person name="Doung Y.-C."/>
            <person name="Prekeris R."/>
            <person name="Yoo J.-S."/>
            <person name="Scheller R.H."/>
        </authorList>
    </citation>
    <scope>NUCLEOTIDE SEQUENCE [MRNA]</scope>
</reference>
<reference key="3">
    <citation type="journal article" date="2005" name="Science">
        <title>The transcriptional landscape of the mammalian genome.</title>
        <authorList>
            <person name="Carninci P."/>
            <person name="Kasukawa T."/>
            <person name="Katayama S."/>
            <person name="Gough J."/>
            <person name="Frith M.C."/>
            <person name="Maeda N."/>
            <person name="Oyama R."/>
            <person name="Ravasi T."/>
            <person name="Lenhard B."/>
            <person name="Wells C."/>
            <person name="Kodzius R."/>
            <person name="Shimokawa K."/>
            <person name="Bajic V.B."/>
            <person name="Brenner S.E."/>
            <person name="Batalov S."/>
            <person name="Forrest A.R."/>
            <person name="Zavolan M."/>
            <person name="Davis M.J."/>
            <person name="Wilming L.G."/>
            <person name="Aidinis V."/>
            <person name="Allen J.E."/>
            <person name="Ambesi-Impiombato A."/>
            <person name="Apweiler R."/>
            <person name="Aturaliya R.N."/>
            <person name="Bailey T.L."/>
            <person name="Bansal M."/>
            <person name="Baxter L."/>
            <person name="Beisel K.W."/>
            <person name="Bersano T."/>
            <person name="Bono H."/>
            <person name="Chalk A.M."/>
            <person name="Chiu K.P."/>
            <person name="Choudhary V."/>
            <person name="Christoffels A."/>
            <person name="Clutterbuck D.R."/>
            <person name="Crowe M.L."/>
            <person name="Dalla E."/>
            <person name="Dalrymple B.P."/>
            <person name="de Bono B."/>
            <person name="Della Gatta G."/>
            <person name="di Bernardo D."/>
            <person name="Down T."/>
            <person name="Engstrom P."/>
            <person name="Fagiolini M."/>
            <person name="Faulkner G."/>
            <person name="Fletcher C.F."/>
            <person name="Fukushima T."/>
            <person name="Furuno M."/>
            <person name="Futaki S."/>
            <person name="Gariboldi M."/>
            <person name="Georgii-Hemming P."/>
            <person name="Gingeras T.R."/>
            <person name="Gojobori T."/>
            <person name="Green R.E."/>
            <person name="Gustincich S."/>
            <person name="Harbers M."/>
            <person name="Hayashi Y."/>
            <person name="Hensch T.K."/>
            <person name="Hirokawa N."/>
            <person name="Hill D."/>
            <person name="Huminiecki L."/>
            <person name="Iacono M."/>
            <person name="Ikeo K."/>
            <person name="Iwama A."/>
            <person name="Ishikawa T."/>
            <person name="Jakt M."/>
            <person name="Kanapin A."/>
            <person name="Katoh M."/>
            <person name="Kawasawa Y."/>
            <person name="Kelso J."/>
            <person name="Kitamura H."/>
            <person name="Kitano H."/>
            <person name="Kollias G."/>
            <person name="Krishnan S.P."/>
            <person name="Kruger A."/>
            <person name="Kummerfeld S.K."/>
            <person name="Kurochkin I.V."/>
            <person name="Lareau L.F."/>
            <person name="Lazarevic D."/>
            <person name="Lipovich L."/>
            <person name="Liu J."/>
            <person name="Liuni S."/>
            <person name="McWilliam S."/>
            <person name="Madan Babu M."/>
            <person name="Madera M."/>
            <person name="Marchionni L."/>
            <person name="Matsuda H."/>
            <person name="Matsuzawa S."/>
            <person name="Miki H."/>
            <person name="Mignone F."/>
            <person name="Miyake S."/>
            <person name="Morris K."/>
            <person name="Mottagui-Tabar S."/>
            <person name="Mulder N."/>
            <person name="Nakano N."/>
            <person name="Nakauchi H."/>
            <person name="Ng P."/>
            <person name="Nilsson R."/>
            <person name="Nishiguchi S."/>
            <person name="Nishikawa S."/>
            <person name="Nori F."/>
            <person name="Ohara O."/>
            <person name="Okazaki Y."/>
            <person name="Orlando V."/>
            <person name="Pang K.C."/>
            <person name="Pavan W.J."/>
            <person name="Pavesi G."/>
            <person name="Pesole G."/>
            <person name="Petrovsky N."/>
            <person name="Piazza S."/>
            <person name="Reed J."/>
            <person name="Reid J.F."/>
            <person name="Ring B.Z."/>
            <person name="Ringwald M."/>
            <person name="Rost B."/>
            <person name="Ruan Y."/>
            <person name="Salzberg S.L."/>
            <person name="Sandelin A."/>
            <person name="Schneider C."/>
            <person name="Schoenbach C."/>
            <person name="Sekiguchi K."/>
            <person name="Semple C.A."/>
            <person name="Seno S."/>
            <person name="Sessa L."/>
            <person name="Sheng Y."/>
            <person name="Shibata Y."/>
            <person name="Shimada H."/>
            <person name="Shimada K."/>
            <person name="Silva D."/>
            <person name="Sinclair B."/>
            <person name="Sperling S."/>
            <person name="Stupka E."/>
            <person name="Sugiura K."/>
            <person name="Sultana R."/>
            <person name="Takenaka Y."/>
            <person name="Taki K."/>
            <person name="Tammoja K."/>
            <person name="Tan S.L."/>
            <person name="Tang S."/>
            <person name="Taylor M.S."/>
            <person name="Tegner J."/>
            <person name="Teichmann S.A."/>
            <person name="Ueda H.R."/>
            <person name="van Nimwegen E."/>
            <person name="Verardo R."/>
            <person name="Wei C.L."/>
            <person name="Yagi K."/>
            <person name="Yamanishi H."/>
            <person name="Zabarovsky E."/>
            <person name="Zhu S."/>
            <person name="Zimmer A."/>
            <person name="Hide W."/>
            <person name="Bult C."/>
            <person name="Grimmond S.M."/>
            <person name="Teasdale R.D."/>
            <person name="Liu E.T."/>
            <person name="Brusic V."/>
            <person name="Quackenbush J."/>
            <person name="Wahlestedt C."/>
            <person name="Mattick J.S."/>
            <person name="Hume D.A."/>
            <person name="Kai C."/>
            <person name="Sasaki D."/>
            <person name="Tomaru Y."/>
            <person name="Fukuda S."/>
            <person name="Kanamori-Katayama M."/>
            <person name="Suzuki M."/>
            <person name="Aoki J."/>
            <person name="Arakawa T."/>
            <person name="Iida J."/>
            <person name="Imamura K."/>
            <person name="Itoh M."/>
            <person name="Kato T."/>
            <person name="Kawaji H."/>
            <person name="Kawagashira N."/>
            <person name="Kawashima T."/>
            <person name="Kojima M."/>
            <person name="Kondo S."/>
            <person name="Konno H."/>
            <person name="Nakano K."/>
            <person name="Ninomiya N."/>
            <person name="Nishio T."/>
            <person name="Okada M."/>
            <person name="Plessy C."/>
            <person name="Shibata K."/>
            <person name="Shiraki T."/>
            <person name="Suzuki S."/>
            <person name="Tagami M."/>
            <person name="Waki K."/>
            <person name="Watahiki A."/>
            <person name="Okamura-Oho Y."/>
            <person name="Suzuki H."/>
            <person name="Kawai J."/>
            <person name="Hayashizaki Y."/>
        </authorList>
    </citation>
    <scope>NUCLEOTIDE SEQUENCE [LARGE SCALE MRNA]</scope>
    <source>
        <strain>C57BL/6J</strain>
        <tissue>Lung</tissue>
        <tissue>Skin</tissue>
    </source>
</reference>
<reference key="4">
    <citation type="journal article" date="2004" name="Genome Res.">
        <title>The status, quality, and expansion of the NIH full-length cDNA project: the Mammalian Gene Collection (MGC).</title>
        <authorList>
            <consortium name="The MGC Project Team"/>
        </authorList>
    </citation>
    <scope>NUCLEOTIDE SEQUENCE [LARGE SCALE MRNA]</scope>
    <source>
        <strain>Czech II</strain>
        <tissue>Mammary gland</tissue>
    </source>
</reference>
<reference key="5">
    <citation type="journal article" date="2009" name="Biochem. J.">
        <title>A VAMP7/Vti1a SNARE complex distinguishes a non-conventional traffic route to the cell surface used by KChIP1 and Kv4 potassium channels.</title>
        <authorList>
            <person name="Flowerdew S.E."/>
            <person name="Burgoyne R.D."/>
        </authorList>
    </citation>
    <scope>FUNCTION</scope>
</reference>
<reference key="6">
    <citation type="journal article" date="2010" name="Cell">
        <title>A tissue-specific atlas of mouse protein phosphorylation and expression.</title>
        <authorList>
            <person name="Huttlin E.L."/>
            <person name="Jedrychowski M.P."/>
            <person name="Elias J.E."/>
            <person name="Goswami T."/>
            <person name="Rad R."/>
            <person name="Beausoleil S.A."/>
            <person name="Villen J."/>
            <person name="Haas W."/>
            <person name="Sowa M.E."/>
            <person name="Gygi S.P."/>
        </authorList>
    </citation>
    <scope>IDENTIFICATION BY MASS SPECTROMETRY [LARGE SCALE ANALYSIS]</scope>
    <source>
        <tissue>Brain</tissue>
        <tissue>Heart</tissue>
        <tissue>Lung</tissue>
        <tissue>Spleen</tissue>
        <tissue>Testis</tissue>
    </source>
</reference>
<reference key="7">
    <citation type="submission" date="2005-05" db="PDB data bank">
        <title>Solution structure of RSGI RUH-009, an N-terminal domain of VTI1A [Mus musculus].</title>
        <authorList>
            <consortium name="RIKEN structural genomics initiative (RSGI)"/>
        </authorList>
    </citation>
    <scope>STRUCTURE BY NMR OF 3-94</scope>
</reference>
<proteinExistence type="evidence at protein level"/>
<keyword id="KW-0002">3D-structure</keyword>
<keyword id="KW-0175">Coiled coil</keyword>
<keyword id="KW-0333">Golgi apparatus</keyword>
<keyword id="KW-0472">Membrane</keyword>
<keyword id="KW-0653">Protein transport</keyword>
<keyword id="KW-1185">Reference proteome</keyword>
<keyword id="KW-0812">Transmembrane</keyword>
<keyword id="KW-1133">Transmembrane helix</keyword>
<keyword id="KW-0813">Transport</keyword>
<accession>O89116</accession>
<accession>Q545P9</accession>
<dbReference type="EMBL" id="AF035823">
    <property type="protein sequence ID" value="AAC32049.1"/>
    <property type="molecule type" value="mRNA"/>
</dbReference>
<dbReference type="EMBL" id="AF035209">
    <property type="protein sequence ID" value="AAC23482.1"/>
    <property type="molecule type" value="mRNA"/>
</dbReference>
<dbReference type="EMBL" id="AK004751">
    <property type="protein sequence ID" value="BAB23532.1"/>
    <property type="molecule type" value="mRNA"/>
</dbReference>
<dbReference type="EMBL" id="AK028646">
    <property type="protein sequence ID" value="BAC26046.1"/>
    <property type="molecule type" value="mRNA"/>
</dbReference>
<dbReference type="EMBL" id="BC019386">
    <property type="protein sequence ID" value="AAH19386.1"/>
    <property type="molecule type" value="mRNA"/>
</dbReference>
<dbReference type="CCDS" id="CCDS29910.1"/>
<dbReference type="RefSeq" id="NP_001280615.1">
    <property type="nucleotide sequence ID" value="NM_001293686.1"/>
</dbReference>
<dbReference type="RefSeq" id="NP_058558.1">
    <property type="nucleotide sequence ID" value="NM_016862.4"/>
</dbReference>
<dbReference type="PDB" id="1VCS">
    <property type="method" value="NMR"/>
    <property type="chains" value="A=6-94"/>
</dbReference>
<dbReference type="PDBsum" id="1VCS"/>
<dbReference type="SMR" id="O89116"/>
<dbReference type="BioGRID" id="207331">
    <property type="interactions" value="13"/>
</dbReference>
<dbReference type="FunCoup" id="O89116">
    <property type="interactions" value="3510"/>
</dbReference>
<dbReference type="IntAct" id="O89116">
    <property type="interactions" value="1"/>
</dbReference>
<dbReference type="STRING" id="10090.ENSMUSP00000093644"/>
<dbReference type="iPTMnet" id="O89116"/>
<dbReference type="PhosphoSitePlus" id="O89116"/>
<dbReference type="PaxDb" id="10090-ENSMUSP00000093644"/>
<dbReference type="PeptideAtlas" id="O89116"/>
<dbReference type="ProteomicsDB" id="297615"/>
<dbReference type="Pumba" id="O89116"/>
<dbReference type="Antibodypedia" id="31821">
    <property type="antibodies" value="274 antibodies from 31 providers"/>
</dbReference>
<dbReference type="DNASU" id="53611"/>
<dbReference type="Ensembl" id="ENSMUST00000095950.3">
    <property type="protein sequence ID" value="ENSMUSP00000093644.3"/>
    <property type="gene ID" value="ENSMUSG00000024983.11"/>
</dbReference>
<dbReference type="GeneID" id="53611"/>
<dbReference type="KEGG" id="mmu:53611"/>
<dbReference type="UCSC" id="uc008hxw.2">
    <property type="organism name" value="mouse"/>
</dbReference>
<dbReference type="AGR" id="MGI:1855699"/>
<dbReference type="CTD" id="143187"/>
<dbReference type="MGI" id="MGI:1855699">
    <property type="gene designation" value="Vti1a"/>
</dbReference>
<dbReference type="VEuPathDB" id="HostDB:ENSMUSG00000024983"/>
<dbReference type="eggNOG" id="KOG1666">
    <property type="taxonomic scope" value="Eukaryota"/>
</dbReference>
<dbReference type="GeneTree" id="ENSGT00950000183192"/>
<dbReference type="HOGENOM" id="CLU_075474_1_0_1"/>
<dbReference type="InParanoid" id="O89116"/>
<dbReference type="OrthoDB" id="430637at2759"/>
<dbReference type="PhylomeDB" id="O89116"/>
<dbReference type="TreeFam" id="TF312874"/>
<dbReference type="Reactome" id="R-MMU-6811438">
    <property type="pathway name" value="Intra-Golgi traffic"/>
</dbReference>
<dbReference type="Reactome" id="R-MMU-6811440">
    <property type="pathway name" value="Retrograde transport at the Trans-Golgi-Network"/>
</dbReference>
<dbReference type="BioGRID-ORCS" id="53611">
    <property type="hits" value="1 hit in 79 CRISPR screens"/>
</dbReference>
<dbReference type="CD-CODE" id="CE726F99">
    <property type="entry name" value="Postsynaptic density"/>
</dbReference>
<dbReference type="ChiTaRS" id="Vti1a">
    <property type="organism name" value="mouse"/>
</dbReference>
<dbReference type="EvolutionaryTrace" id="O89116"/>
<dbReference type="PRO" id="PR:O89116"/>
<dbReference type="Proteomes" id="UP000000589">
    <property type="component" value="Chromosome 19"/>
</dbReference>
<dbReference type="RNAct" id="O89116">
    <property type="molecule type" value="protein"/>
</dbReference>
<dbReference type="Bgee" id="ENSMUSG00000024983">
    <property type="expression patterns" value="Expressed in embryonic brain and 226 other cell types or tissues"/>
</dbReference>
<dbReference type="ExpressionAtlas" id="O89116">
    <property type="expression patterns" value="baseline and differential"/>
</dbReference>
<dbReference type="GO" id="GO:0030136">
    <property type="term" value="C:clathrin-coated vesicle"/>
    <property type="evidence" value="ECO:0000250"/>
    <property type="project" value="ParkinsonsUK-UCL"/>
</dbReference>
<dbReference type="GO" id="GO:0005829">
    <property type="term" value="C:cytosol"/>
    <property type="evidence" value="ECO:0007669"/>
    <property type="project" value="GOC"/>
</dbReference>
<dbReference type="GO" id="GO:0005768">
    <property type="term" value="C:endosome"/>
    <property type="evidence" value="ECO:0000250"/>
    <property type="project" value="ParkinsonsUK-UCL"/>
</dbReference>
<dbReference type="GO" id="GO:0000139">
    <property type="term" value="C:Golgi membrane"/>
    <property type="evidence" value="ECO:0007669"/>
    <property type="project" value="UniProtKB-SubCell"/>
</dbReference>
<dbReference type="GO" id="GO:0044306">
    <property type="term" value="C:neuron projection terminus"/>
    <property type="evidence" value="ECO:0000250"/>
    <property type="project" value="ParkinsonsUK-UCL"/>
</dbReference>
<dbReference type="GO" id="GO:0043025">
    <property type="term" value="C:neuronal cell body"/>
    <property type="evidence" value="ECO:0000250"/>
    <property type="project" value="ParkinsonsUK-UCL"/>
</dbReference>
<dbReference type="GO" id="GO:0048471">
    <property type="term" value="C:perinuclear region of cytoplasm"/>
    <property type="evidence" value="ECO:0000250"/>
    <property type="project" value="ParkinsonsUK-UCL"/>
</dbReference>
<dbReference type="GO" id="GO:0031201">
    <property type="term" value="C:SNARE complex"/>
    <property type="evidence" value="ECO:0000250"/>
    <property type="project" value="ParkinsonsUK-UCL"/>
</dbReference>
<dbReference type="GO" id="GO:0008021">
    <property type="term" value="C:synaptic vesicle"/>
    <property type="evidence" value="ECO:0000250"/>
    <property type="project" value="ParkinsonsUK-UCL"/>
</dbReference>
<dbReference type="GO" id="GO:0005484">
    <property type="term" value="F:SNAP receptor activity"/>
    <property type="evidence" value="ECO:0007669"/>
    <property type="project" value="InterPro"/>
</dbReference>
<dbReference type="GO" id="GO:0006888">
    <property type="term" value="P:endoplasmic reticulum to Golgi vesicle-mediated transport"/>
    <property type="evidence" value="ECO:0000250"/>
    <property type="project" value="ParkinsonsUK-UCL"/>
</dbReference>
<dbReference type="GO" id="GO:0006886">
    <property type="term" value="P:intracellular protein transport"/>
    <property type="evidence" value="ECO:0007669"/>
    <property type="project" value="InterPro"/>
</dbReference>
<dbReference type="GO" id="GO:0042147">
    <property type="term" value="P:retrograde transport, endosome to Golgi"/>
    <property type="evidence" value="ECO:0000250"/>
    <property type="project" value="UniProtKB"/>
</dbReference>
<dbReference type="GO" id="GO:0048280">
    <property type="term" value="P:vesicle fusion with Golgi apparatus"/>
    <property type="evidence" value="ECO:0000250"/>
    <property type="project" value="ParkinsonsUK-UCL"/>
</dbReference>
<dbReference type="CDD" id="cd15891">
    <property type="entry name" value="SNARE_Vti1a"/>
    <property type="match status" value="1"/>
</dbReference>
<dbReference type="FunFam" id="1.20.5.110:FF:000078">
    <property type="entry name" value="Vesicle transport through interaction with t-SNAREs 1A"/>
    <property type="match status" value="1"/>
</dbReference>
<dbReference type="FunFam" id="1.20.58.400:FF:000001">
    <property type="entry name" value="Vesicle transport through interaction with t-SNAREs homolog 1A"/>
    <property type="match status" value="1"/>
</dbReference>
<dbReference type="Gene3D" id="1.20.5.110">
    <property type="match status" value="1"/>
</dbReference>
<dbReference type="Gene3D" id="1.20.58.400">
    <property type="entry name" value="t-snare proteins"/>
    <property type="match status" value="1"/>
</dbReference>
<dbReference type="InterPro" id="IPR027027">
    <property type="entry name" value="GOSR2/Membrin/Bos1"/>
</dbReference>
<dbReference type="InterPro" id="IPR010989">
    <property type="entry name" value="SNARE"/>
</dbReference>
<dbReference type="InterPro" id="IPR000727">
    <property type="entry name" value="T_SNARE_dom"/>
</dbReference>
<dbReference type="InterPro" id="IPR038407">
    <property type="entry name" value="v-SNARE_N_sf"/>
</dbReference>
<dbReference type="InterPro" id="IPR007705">
    <property type="entry name" value="Vesicle_trsprt_v-SNARE_N"/>
</dbReference>
<dbReference type="PANTHER" id="PTHR21230:SF26">
    <property type="entry name" value="VESICLE TRANSPORT THROUGH INTERACTION WITH T-SNARES HOMOLOG 1A"/>
    <property type="match status" value="1"/>
</dbReference>
<dbReference type="PANTHER" id="PTHR21230">
    <property type="entry name" value="VESICLE TRANSPORT V-SNARE PROTEIN VTI1-RELATED"/>
    <property type="match status" value="1"/>
</dbReference>
<dbReference type="Pfam" id="PF05008">
    <property type="entry name" value="V-SNARE"/>
    <property type="match status" value="1"/>
</dbReference>
<dbReference type="Pfam" id="PF12352">
    <property type="entry name" value="V-SNARE_C"/>
    <property type="match status" value="1"/>
</dbReference>
<dbReference type="PIRSF" id="PIRSF028865">
    <property type="entry name" value="Membrin-2"/>
    <property type="match status" value="1"/>
</dbReference>
<dbReference type="SMART" id="SM00397">
    <property type="entry name" value="t_SNARE"/>
    <property type="match status" value="1"/>
</dbReference>
<dbReference type="SUPFAM" id="SSF58038">
    <property type="entry name" value="SNARE fusion complex"/>
    <property type="match status" value="1"/>
</dbReference>
<dbReference type="SUPFAM" id="SSF47661">
    <property type="entry name" value="t-snare proteins"/>
    <property type="match status" value="1"/>
</dbReference>
<feature type="chain" id="PRO_0000218226" description="Vesicle transport through interaction with t-SNAREs homolog 1A">
    <location>
        <begin position="1"/>
        <end position="217"/>
    </location>
</feature>
<feature type="topological domain" description="Cytoplasmic" evidence="2">
    <location>
        <begin position="1"/>
        <end position="192"/>
    </location>
</feature>
<feature type="transmembrane region" description="Helical; Anchor for type IV membrane protein" evidence="2">
    <location>
        <begin position="193"/>
        <end position="213"/>
    </location>
</feature>
<feature type="topological domain" description="Vesicular" evidence="2">
    <location>
        <begin position="214"/>
        <end position="217"/>
    </location>
</feature>
<feature type="coiled-coil region" evidence="2">
    <location>
        <begin position="31"/>
        <end position="92"/>
    </location>
</feature>
<feature type="coiled-coil region" evidence="2">
    <location>
        <begin position="112"/>
        <end position="178"/>
    </location>
</feature>
<feature type="helix" evidence="6">
    <location>
        <begin position="9"/>
        <end position="25"/>
    </location>
</feature>
<feature type="helix" evidence="6">
    <location>
        <begin position="26"/>
        <end position="28"/>
    </location>
</feature>
<feature type="turn" evidence="6">
    <location>
        <begin position="31"/>
        <end position="33"/>
    </location>
</feature>
<feature type="helix" evidence="6">
    <location>
        <begin position="34"/>
        <end position="59"/>
    </location>
</feature>
<feature type="turn" evidence="6">
    <location>
        <begin position="64"/>
        <end position="66"/>
    </location>
</feature>
<feature type="helix" evidence="6">
    <location>
        <begin position="67"/>
        <end position="87"/>
    </location>
</feature>
<feature type="helix" evidence="6">
    <location>
        <begin position="89"/>
        <end position="92"/>
    </location>
</feature>
<protein>
    <recommendedName>
        <fullName>Vesicle transport through interaction with t-SNAREs homolog 1A</fullName>
    </recommendedName>
    <alternativeName>
        <fullName>Vesicle transport v-SNARE protein Vti1-like 2</fullName>
    </alternativeName>
    <alternativeName>
        <fullName>Vti1-rp2</fullName>
    </alternativeName>
</protein>
<organism>
    <name type="scientific">Mus musculus</name>
    <name type="common">Mouse</name>
    <dbReference type="NCBI Taxonomy" id="10090"/>
    <lineage>
        <taxon>Eukaryota</taxon>
        <taxon>Metazoa</taxon>
        <taxon>Chordata</taxon>
        <taxon>Craniata</taxon>
        <taxon>Vertebrata</taxon>
        <taxon>Euteleostomi</taxon>
        <taxon>Mammalia</taxon>
        <taxon>Eutheria</taxon>
        <taxon>Euarchontoglires</taxon>
        <taxon>Glires</taxon>
        <taxon>Rodentia</taxon>
        <taxon>Myomorpha</taxon>
        <taxon>Muroidea</taxon>
        <taxon>Muridae</taxon>
        <taxon>Murinae</taxon>
        <taxon>Mus</taxon>
        <taxon>Mus</taxon>
    </lineage>
</organism>